<evidence type="ECO:0000255" key="1"/>
<evidence type="ECO:0000255" key="2">
    <source>
        <dbReference type="PROSITE-ProRule" id="PRU00114"/>
    </source>
</evidence>
<evidence type="ECO:0000256" key="3">
    <source>
        <dbReference type="SAM" id="MobiDB-lite"/>
    </source>
</evidence>
<evidence type="ECO:0000269" key="4">
    <source>
    </source>
</evidence>
<evidence type="ECO:0000269" key="5">
    <source>
    </source>
</evidence>
<evidence type="ECO:0000269" key="6">
    <source>
    </source>
</evidence>
<evidence type="ECO:0000269" key="7">
    <source>
    </source>
</evidence>
<evidence type="ECO:0000269" key="8">
    <source>
    </source>
</evidence>
<evidence type="ECO:0000269" key="9">
    <source>
    </source>
</evidence>
<evidence type="ECO:0000269" key="10">
    <source>
    </source>
</evidence>
<evidence type="ECO:0000269" key="11">
    <source>
    </source>
</evidence>
<evidence type="ECO:0000303" key="12">
    <source>
    </source>
</evidence>
<evidence type="ECO:0000305" key="13"/>
<evidence type="ECO:0000305" key="14">
    <source>
    </source>
</evidence>
<evidence type="ECO:0007744" key="15">
    <source>
        <dbReference type="PDB" id="7RNO"/>
    </source>
</evidence>
<evidence type="ECO:0007829" key="16">
    <source>
        <dbReference type="PDB" id="5WER"/>
    </source>
</evidence>
<evidence type="ECO:0007829" key="17">
    <source>
        <dbReference type="PDB" id="7RNO"/>
    </source>
</evidence>
<name>TPSNR_HUMAN</name>
<keyword id="KW-0002">3D-structure</keyword>
<keyword id="KW-0025">Alternative splicing</keyword>
<keyword id="KW-1003">Cell membrane</keyword>
<keyword id="KW-0903">Direct protein sequencing</keyword>
<keyword id="KW-1015">Disulfide bond</keyword>
<keyword id="KW-0256">Endoplasmic reticulum</keyword>
<keyword id="KW-0333">Golgi apparatus</keyword>
<keyword id="KW-0391">Immunity</keyword>
<keyword id="KW-0393">Immunoglobulin domain</keyword>
<keyword id="KW-0472">Membrane</keyword>
<keyword id="KW-0492">Microsome</keyword>
<keyword id="KW-1267">Proteomics identification</keyword>
<keyword id="KW-1185">Reference proteome</keyword>
<keyword id="KW-0677">Repeat</keyword>
<keyword id="KW-0732">Signal</keyword>
<keyword id="KW-0812">Transmembrane</keyword>
<keyword id="KW-1133">Transmembrane helix</keyword>
<accession>Q9BX59</accession>
<accession>Q9NWB8</accession>
<protein>
    <recommendedName>
        <fullName>Tapasin-related protein</fullName>
        <shortName>TAPASIN-R</shortName>
    </recommendedName>
    <alternativeName>
        <fullName>TAP-binding protein-like</fullName>
    </alternativeName>
    <alternativeName>
        <fullName>TAP-binding protein-related protein</fullName>
        <shortName>TAPBP-R</shortName>
    </alternativeName>
    <alternativeName>
        <fullName>Tapasin-like</fullName>
    </alternativeName>
</protein>
<comment type="function">
    <text evidence="8 9">Component of the antigen processing and presentation pathway, which binds to MHC class I coupled with beta2-microglobulin/B2M. Association between TAPBPR and MHC class I occurs in the absence of a functional peptide-loading complex (PLC).</text>
</comment>
<comment type="subunit">
    <text evidence="9 10 11">Interacts with peptide-free HLA-A*02-B2M complexes or those loaded with low affinity peptides, likely facilitating peptide exchange onto higher affinity peptides (PubMed:26869717, PubMed:35725941). Interacts with MR1 in a ligand-independent way; this interaction may stabilize MR1 pool and facilitate ligand loading and dissociation (PubMed:32958637, PubMed:35725941).</text>
</comment>
<comment type="interaction">
    <interactant intactId="EBI-12017416">
        <id>Q9BX59</id>
    </interactant>
    <interactant intactId="EBI-3867333">
        <id>A8MQ03</id>
        <label>CYSRT1</label>
    </interactant>
    <organismsDiffer>false</organismsDiffer>
    <experiments>3</experiments>
</comment>
<comment type="interaction">
    <interactant intactId="EBI-12017416">
        <id>Q9BX59</id>
    </interactant>
    <interactant intactId="EBI-2839473">
        <id>P01892</id>
        <label>HLA-A</label>
    </interactant>
    <organismsDiffer>false</organismsDiffer>
    <experiments>17</experiments>
</comment>
<comment type="interaction">
    <interactant intactId="EBI-12017416">
        <id>Q9BX59</id>
    </interactant>
    <interactant intactId="EBI-1046513">
        <id>P01889</id>
        <label>HLA-B</label>
    </interactant>
    <organismsDiffer>false</organismsDiffer>
    <experiments>3</experiments>
</comment>
<comment type="interaction">
    <interactant intactId="EBI-12017416">
        <id>Q9BX59</id>
    </interactant>
    <interactant intactId="EBI-948001">
        <id>Q15323</id>
        <label>KRT31</label>
    </interactant>
    <organismsDiffer>false</organismsDiffer>
    <experiments>3</experiments>
</comment>
<comment type="interaction">
    <interactant intactId="EBI-12017416">
        <id>Q9BX59</id>
    </interactant>
    <interactant intactId="EBI-1047093">
        <id>O76011</id>
        <label>KRT34</label>
    </interactant>
    <organismsDiffer>false</organismsDiffer>
    <experiments>3</experiments>
</comment>
<comment type="interaction">
    <interactant intactId="EBI-12017416">
        <id>Q9BX59</id>
    </interactant>
    <interactant intactId="EBI-1058674">
        <id>Q92764</id>
        <label>KRT35</label>
    </interactant>
    <organismsDiffer>false</organismsDiffer>
    <experiments>3</experiments>
</comment>
<comment type="interaction">
    <interactant intactId="EBI-12017416">
        <id>Q9BX59</id>
    </interactant>
    <interactant intactId="EBI-10171774">
        <id>P60410</id>
        <label>KRTAP10-8</label>
    </interactant>
    <organismsDiffer>false</organismsDiffer>
    <experiments>3</experiments>
</comment>
<comment type="interaction">
    <interactant intactId="EBI-12017416">
        <id>Q9BX59</id>
    </interactant>
    <interactant intactId="EBI-22310682">
        <id>P0DPK4</id>
        <label>NOTCH2NLC</label>
    </interactant>
    <organismsDiffer>false</organismsDiffer>
    <experiments>3</experiments>
</comment>
<comment type="interaction">
    <interactant intactId="EBI-12017416">
        <id>Q9BX59</id>
    </interactant>
    <interactant intactId="EBI-11339910">
        <id>Q8IYS1</id>
        <label>PM20D2</label>
    </interactant>
    <organismsDiffer>false</organismsDiffer>
    <experiments>3</experiments>
</comment>
<comment type="interaction">
    <interactant intactId="EBI-12017416">
        <id>Q9BX59</id>
    </interactant>
    <interactant intactId="EBI-13636688">
        <id>P15884-3</id>
        <label>TCF4</label>
    </interactant>
    <organismsDiffer>false</organismsDiffer>
    <experiments>3</experiments>
</comment>
<comment type="interaction">
    <interactant intactId="EBI-12017416">
        <id>Q9BX59</id>
    </interactant>
    <interactant intactId="EBI-11139477">
        <id>Q96N21</id>
        <label>TEPSIN</label>
    </interactant>
    <organismsDiffer>false</organismsDiffer>
    <experiments>3</experiments>
</comment>
<comment type="subcellular location">
    <subcellularLocation>
        <location evidence="14">Cell membrane</location>
        <topology evidence="14">Single-pass type I membrane protein</topology>
    </subcellularLocation>
    <subcellularLocation>
        <location evidence="14">Endoplasmic reticulum membrane</location>
        <topology evidence="14">Single-pass type I membrane protein</topology>
    </subcellularLocation>
    <subcellularLocation>
        <location evidence="14">Microsome membrane</location>
        <topology evidence="14">Single-pass type I membrane protein</topology>
    </subcellularLocation>
    <subcellularLocation>
        <location evidence="8">Golgi apparatus membrane</location>
        <topology evidence="8">Single-pass type I membrane protein</topology>
    </subcellularLocation>
    <text>Mainly found in endoplasmic reticulum but a minority is found on the cell surface (PubMed:11920573).</text>
</comment>
<comment type="alternative products">
    <event type="alternative splicing"/>
    <isoform>
        <id>Q9BX59-1</id>
        <name>alpha</name>
        <sequence type="displayed"/>
    </isoform>
    <isoform>
        <id>Q9BX59-2</id>
        <name>beta</name>
        <sequence type="described" ref="VSP_057096"/>
    </isoform>
    <isoform>
        <id>Q9BX59-3</id>
        <name>gamma</name>
        <sequence type="described" ref="VSP_057094"/>
    </isoform>
    <isoform>
        <id>Q9BX59-4</id>
        <name>delta</name>
        <sequence type="described" ref="VSP_057091 VSP_057092"/>
    </isoform>
    <isoform>
        <id>Q9BX59-5</id>
        <name>epsilon</name>
        <sequence type="described" ref="VSP_057089"/>
    </isoform>
    <isoform>
        <id>Q9BX59-6</id>
        <name>eta</name>
        <sequence type="described" ref="VSP_057090 VSP_057093"/>
    </isoform>
    <isoform>
        <id>Q9BX59-7</id>
        <name>zeta</name>
        <sequence type="described" ref="VSP_057095"/>
    </isoform>
</comment>
<comment type="induction">
    <text evidence="8">By interferon gamma.</text>
</comment>
<comment type="miscellaneous">
    <molecule>Isoform beta</molecule>
    <text evidence="13">Has reduced cell surface expression, and does not down-regulate MHC class I surface expression as efficiently as isoform alpha.</text>
</comment>
<comment type="miscellaneous">
    <molecule>Isoform gamma</molecule>
    <text evidence="13">Does not interact with MHC class I.</text>
</comment>
<comment type="miscellaneous">
    <molecule>Isoform delta</molecule>
    <text evidence="13">May be produced at very low levels due to a premature stop codon in the mRNA, leading to nonsense-mediated mRNA decay.</text>
</comment>
<sequence>MGTQEGWCLLLCLALSGAAETKPHPAEGQWRAVDVVLDCFLAKDGAHRGALASSEDRARASLVLKQVPVLDDGSLEDFTDFQGGTLAQDDPPIIFEASVDLVQIPQAEALLHADCSGKEVTCEISRYFLQMTETTVKTAAWFMANMQVSGGGPSISLVMKTPRVTKNEALWHPTLNLPLSPQGTVRTAVEFQVMTQTQSLSFLLGSSASLDCGFSMAPGLDLISVEWRLQHKGRGQLVYSWTAGQGQAVRKGATLEPAQLGMARDASLTLPGLTIQDEGTYICQITTSLYRAQQIIQLNIQASPKVRLSLANEALLPTLICDIAGYYPLDVVVTWTREELGGSPAQVSGASFSSLRQSVAGTYSISSSLTAEPGSAGATYTCQVTHISLEEPLGASTQVVPPERRTALGVIFASSLFLLALMFLGLQRRQAPTGLGLLQAERWETTSCADTQSSHLHEDRTARVSQPS</sequence>
<reference key="1">
    <citation type="journal article" date="2002" name="Eur. J. Immunol.">
        <title>A human TAPBP (TAPASIN)-related gene, TAPBP-R.</title>
        <authorList>
            <person name="Teng M.S."/>
            <person name="Stephens R."/>
            <person name="Du Pasquier L."/>
            <person name="Freeman T."/>
            <person name="Lindquist J.A."/>
            <person name="Trowsdale J."/>
        </authorList>
    </citation>
    <scope>NUCLEOTIDE SEQUENCE [MRNA] (ISOFORM ALPHA)</scope>
    <scope>SUBCELLULAR LOCATION</scope>
    <scope>VARIANTS ARG-151 AND MET-334</scope>
</reference>
<reference key="2">
    <citation type="journal article" date="2004" name="Nat. Genet.">
        <title>Complete sequencing and characterization of 21,243 full-length human cDNAs.</title>
        <authorList>
            <person name="Ota T."/>
            <person name="Suzuki Y."/>
            <person name="Nishikawa T."/>
            <person name="Otsuki T."/>
            <person name="Sugiyama T."/>
            <person name="Irie R."/>
            <person name="Wakamatsu A."/>
            <person name="Hayashi K."/>
            <person name="Sato H."/>
            <person name="Nagai K."/>
            <person name="Kimura K."/>
            <person name="Makita H."/>
            <person name="Sekine M."/>
            <person name="Obayashi M."/>
            <person name="Nishi T."/>
            <person name="Shibahara T."/>
            <person name="Tanaka T."/>
            <person name="Ishii S."/>
            <person name="Yamamoto J."/>
            <person name="Saito K."/>
            <person name="Kawai Y."/>
            <person name="Isono Y."/>
            <person name="Nakamura Y."/>
            <person name="Nagahari K."/>
            <person name="Murakami K."/>
            <person name="Yasuda T."/>
            <person name="Iwayanagi T."/>
            <person name="Wagatsuma M."/>
            <person name="Shiratori A."/>
            <person name="Sudo H."/>
            <person name="Hosoiri T."/>
            <person name="Kaku Y."/>
            <person name="Kodaira H."/>
            <person name="Kondo H."/>
            <person name="Sugawara M."/>
            <person name="Takahashi M."/>
            <person name="Kanda K."/>
            <person name="Yokoi T."/>
            <person name="Furuya T."/>
            <person name="Kikkawa E."/>
            <person name="Omura Y."/>
            <person name="Abe K."/>
            <person name="Kamihara K."/>
            <person name="Katsuta N."/>
            <person name="Sato K."/>
            <person name="Tanikawa M."/>
            <person name="Yamazaki M."/>
            <person name="Ninomiya K."/>
            <person name="Ishibashi T."/>
            <person name="Yamashita H."/>
            <person name="Murakawa K."/>
            <person name="Fujimori K."/>
            <person name="Tanai H."/>
            <person name="Kimata M."/>
            <person name="Watanabe M."/>
            <person name="Hiraoka S."/>
            <person name="Chiba Y."/>
            <person name="Ishida S."/>
            <person name="Ono Y."/>
            <person name="Takiguchi S."/>
            <person name="Watanabe S."/>
            <person name="Yosida M."/>
            <person name="Hotuta T."/>
            <person name="Kusano J."/>
            <person name="Kanehori K."/>
            <person name="Takahashi-Fujii A."/>
            <person name="Hara H."/>
            <person name="Tanase T.-O."/>
            <person name="Nomura Y."/>
            <person name="Togiya S."/>
            <person name="Komai F."/>
            <person name="Hara R."/>
            <person name="Takeuchi K."/>
            <person name="Arita M."/>
            <person name="Imose N."/>
            <person name="Musashino K."/>
            <person name="Yuuki H."/>
            <person name="Oshima A."/>
            <person name="Sasaki N."/>
            <person name="Aotsuka S."/>
            <person name="Yoshikawa Y."/>
            <person name="Matsunawa H."/>
            <person name="Ichihara T."/>
            <person name="Shiohata N."/>
            <person name="Sano S."/>
            <person name="Moriya S."/>
            <person name="Momiyama H."/>
            <person name="Satoh N."/>
            <person name="Takami S."/>
            <person name="Terashima Y."/>
            <person name="Suzuki O."/>
            <person name="Nakagawa S."/>
            <person name="Senoh A."/>
            <person name="Mizoguchi H."/>
            <person name="Goto Y."/>
            <person name="Shimizu F."/>
            <person name="Wakebe H."/>
            <person name="Hishigaki H."/>
            <person name="Watanabe T."/>
            <person name="Sugiyama A."/>
            <person name="Takemoto M."/>
            <person name="Kawakami B."/>
            <person name="Yamazaki M."/>
            <person name="Watanabe K."/>
            <person name="Kumagai A."/>
            <person name="Itakura S."/>
            <person name="Fukuzumi Y."/>
            <person name="Fujimori Y."/>
            <person name="Komiyama M."/>
            <person name="Tashiro H."/>
            <person name="Tanigami A."/>
            <person name="Fujiwara T."/>
            <person name="Ono T."/>
            <person name="Yamada K."/>
            <person name="Fujii Y."/>
            <person name="Ozaki K."/>
            <person name="Hirao M."/>
            <person name="Ohmori Y."/>
            <person name="Kawabata A."/>
            <person name="Hikiji T."/>
            <person name="Kobatake N."/>
            <person name="Inagaki H."/>
            <person name="Ikema Y."/>
            <person name="Okamoto S."/>
            <person name="Okitani R."/>
            <person name="Kawakami T."/>
            <person name="Noguchi S."/>
            <person name="Itoh T."/>
            <person name="Shigeta K."/>
            <person name="Senba T."/>
            <person name="Matsumura K."/>
            <person name="Nakajima Y."/>
            <person name="Mizuno T."/>
            <person name="Morinaga M."/>
            <person name="Sasaki M."/>
            <person name="Togashi T."/>
            <person name="Oyama M."/>
            <person name="Hata H."/>
            <person name="Watanabe M."/>
            <person name="Komatsu T."/>
            <person name="Mizushima-Sugano J."/>
            <person name="Satoh T."/>
            <person name="Shirai Y."/>
            <person name="Takahashi Y."/>
            <person name="Nakagawa K."/>
            <person name="Okumura K."/>
            <person name="Nagase T."/>
            <person name="Nomura N."/>
            <person name="Kikuchi H."/>
            <person name="Masuho Y."/>
            <person name="Yamashita R."/>
            <person name="Nakai K."/>
            <person name="Yada T."/>
            <person name="Nakamura Y."/>
            <person name="Ohara O."/>
            <person name="Isogai T."/>
            <person name="Sugano S."/>
        </authorList>
    </citation>
    <scope>NUCLEOTIDE SEQUENCE [LARGE SCALE MRNA] (ISOFORM ALPHA)</scope>
    <scope>VARIANTS VAL-42; VAL-146; ARG-151; ALA-165 AND VAL-169</scope>
    <source>
        <tissue>Embryo</tissue>
        <tissue>Placenta</tissue>
    </source>
</reference>
<reference key="3">
    <citation type="journal article" date="2006" name="Nature">
        <title>The finished DNA sequence of human chromosome 12.</title>
        <authorList>
            <person name="Scherer S.E."/>
            <person name="Muzny D.M."/>
            <person name="Buhay C.J."/>
            <person name="Chen R."/>
            <person name="Cree A."/>
            <person name="Ding Y."/>
            <person name="Dugan-Rocha S."/>
            <person name="Gill R."/>
            <person name="Gunaratne P."/>
            <person name="Harris R.A."/>
            <person name="Hawes A.C."/>
            <person name="Hernandez J."/>
            <person name="Hodgson A.V."/>
            <person name="Hume J."/>
            <person name="Jackson A."/>
            <person name="Khan Z.M."/>
            <person name="Kovar-Smith C."/>
            <person name="Lewis L.R."/>
            <person name="Lozado R.J."/>
            <person name="Metzker M.L."/>
            <person name="Milosavljevic A."/>
            <person name="Miner G.R."/>
            <person name="Montgomery K.T."/>
            <person name="Morgan M.B."/>
            <person name="Nazareth L.V."/>
            <person name="Scott G."/>
            <person name="Sodergren E."/>
            <person name="Song X.-Z."/>
            <person name="Steffen D."/>
            <person name="Lovering R.C."/>
            <person name="Wheeler D.A."/>
            <person name="Worley K.C."/>
            <person name="Yuan Y."/>
            <person name="Zhang Z."/>
            <person name="Adams C.Q."/>
            <person name="Ansari-Lari M.A."/>
            <person name="Ayele M."/>
            <person name="Brown M.J."/>
            <person name="Chen G."/>
            <person name="Chen Z."/>
            <person name="Clerc-Blankenburg K.P."/>
            <person name="Davis C."/>
            <person name="Delgado O."/>
            <person name="Dinh H.H."/>
            <person name="Draper H."/>
            <person name="Gonzalez-Garay M.L."/>
            <person name="Havlak P."/>
            <person name="Jackson L.R."/>
            <person name="Jacob L.S."/>
            <person name="Kelly S.H."/>
            <person name="Li L."/>
            <person name="Li Z."/>
            <person name="Liu J."/>
            <person name="Liu W."/>
            <person name="Lu J."/>
            <person name="Maheshwari M."/>
            <person name="Nguyen B.-V."/>
            <person name="Okwuonu G.O."/>
            <person name="Pasternak S."/>
            <person name="Perez L.M."/>
            <person name="Plopper F.J.H."/>
            <person name="Santibanez J."/>
            <person name="Shen H."/>
            <person name="Tabor P.E."/>
            <person name="Verduzco D."/>
            <person name="Waldron L."/>
            <person name="Wang Q."/>
            <person name="Williams G.A."/>
            <person name="Zhang J."/>
            <person name="Zhou J."/>
            <person name="Allen C.C."/>
            <person name="Amin A.G."/>
            <person name="Anyalebechi V."/>
            <person name="Bailey M."/>
            <person name="Barbaria J.A."/>
            <person name="Bimage K.E."/>
            <person name="Bryant N.P."/>
            <person name="Burch P.E."/>
            <person name="Burkett C.E."/>
            <person name="Burrell K.L."/>
            <person name="Calderon E."/>
            <person name="Cardenas V."/>
            <person name="Carter K."/>
            <person name="Casias K."/>
            <person name="Cavazos I."/>
            <person name="Cavazos S.R."/>
            <person name="Ceasar H."/>
            <person name="Chacko J."/>
            <person name="Chan S.N."/>
            <person name="Chavez D."/>
            <person name="Christopoulos C."/>
            <person name="Chu J."/>
            <person name="Cockrell R."/>
            <person name="Cox C.D."/>
            <person name="Dang M."/>
            <person name="Dathorne S.R."/>
            <person name="David R."/>
            <person name="Davis C.M."/>
            <person name="Davy-Carroll L."/>
            <person name="Deshazo D.R."/>
            <person name="Donlin J.E."/>
            <person name="D'Souza L."/>
            <person name="Eaves K.A."/>
            <person name="Egan A."/>
            <person name="Emery-Cohen A.J."/>
            <person name="Escotto M."/>
            <person name="Flagg N."/>
            <person name="Forbes L.D."/>
            <person name="Gabisi A.M."/>
            <person name="Garza M."/>
            <person name="Hamilton C."/>
            <person name="Henderson N."/>
            <person name="Hernandez O."/>
            <person name="Hines S."/>
            <person name="Hogues M.E."/>
            <person name="Huang M."/>
            <person name="Idlebird D.G."/>
            <person name="Johnson R."/>
            <person name="Jolivet A."/>
            <person name="Jones S."/>
            <person name="Kagan R."/>
            <person name="King L.M."/>
            <person name="Leal B."/>
            <person name="Lebow H."/>
            <person name="Lee S."/>
            <person name="LeVan J.M."/>
            <person name="Lewis L.C."/>
            <person name="London P."/>
            <person name="Lorensuhewa L.M."/>
            <person name="Loulseged H."/>
            <person name="Lovett D.A."/>
            <person name="Lucier A."/>
            <person name="Lucier R.L."/>
            <person name="Ma J."/>
            <person name="Madu R.C."/>
            <person name="Mapua P."/>
            <person name="Martindale A.D."/>
            <person name="Martinez E."/>
            <person name="Massey E."/>
            <person name="Mawhiney S."/>
            <person name="Meador M.G."/>
            <person name="Mendez S."/>
            <person name="Mercado C."/>
            <person name="Mercado I.C."/>
            <person name="Merritt C.E."/>
            <person name="Miner Z.L."/>
            <person name="Minja E."/>
            <person name="Mitchell T."/>
            <person name="Mohabbat F."/>
            <person name="Mohabbat K."/>
            <person name="Montgomery B."/>
            <person name="Moore N."/>
            <person name="Morris S."/>
            <person name="Munidasa M."/>
            <person name="Ngo R.N."/>
            <person name="Nguyen N.B."/>
            <person name="Nickerson E."/>
            <person name="Nwaokelemeh O.O."/>
            <person name="Nwokenkwo S."/>
            <person name="Obregon M."/>
            <person name="Oguh M."/>
            <person name="Oragunye N."/>
            <person name="Oviedo R.J."/>
            <person name="Parish B.J."/>
            <person name="Parker D.N."/>
            <person name="Parrish J."/>
            <person name="Parks K.L."/>
            <person name="Paul H.A."/>
            <person name="Payton B.A."/>
            <person name="Perez A."/>
            <person name="Perrin W."/>
            <person name="Pickens A."/>
            <person name="Primus E.L."/>
            <person name="Pu L.-L."/>
            <person name="Puazo M."/>
            <person name="Quiles M.M."/>
            <person name="Quiroz J.B."/>
            <person name="Rabata D."/>
            <person name="Reeves K."/>
            <person name="Ruiz S.J."/>
            <person name="Shao H."/>
            <person name="Sisson I."/>
            <person name="Sonaike T."/>
            <person name="Sorelle R.P."/>
            <person name="Sutton A.E."/>
            <person name="Svatek A.F."/>
            <person name="Svetz L.A."/>
            <person name="Tamerisa K.S."/>
            <person name="Taylor T.R."/>
            <person name="Teague B."/>
            <person name="Thomas N."/>
            <person name="Thorn R.D."/>
            <person name="Trejos Z.Y."/>
            <person name="Trevino B.K."/>
            <person name="Ukegbu O.N."/>
            <person name="Urban J.B."/>
            <person name="Vasquez L.I."/>
            <person name="Vera V.A."/>
            <person name="Villasana D.M."/>
            <person name="Wang L."/>
            <person name="Ward-Moore S."/>
            <person name="Warren J.T."/>
            <person name="Wei X."/>
            <person name="White F."/>
            <person name="Williamson A.L."/>
            <person name="Wleczyk R."/>
            <person name="Wooden H.S."/>
            <person name="Wooden S.H."/>
            <person name="Yen J."/>
            <person name="Yoon L."/>
            <person name="Yoon V."/>
            <person name="Zorrilla S.E."/>
            <person name="Nelson D."/>
            <person name="Kucherlapati R."/>
            <person name="Weinstock G."/>
            <person name="Gibbs R.A."/>
        </authorList>
    </citation>
    <scope>NUCLEOTIDE SEQUENCE [LARGE SCALE GENOMIC DNA]</scope>
</reference>
<reference key="4">
    <citation type="journal article" date="2004" name="Genome Res.">
        <title>The status, quality, and expansion of the NIH full-length cDNA project: the Mammalian Gene Collection (MGC).</title>
        <authorList>
            <consortium name="The MGC Project Team"/>
        </authorList>
    </citation>
    <scope>NUCLEOTIDE SEQUENCE [LARGE SCALE MRNA] (ISOFORM ALPHA)</scope>
    <scope>VARIANTS VAL-42; VAL-146; ALA-165 AND VAL-169</scope>
    <source>
        <tissue>Skin</tissue>
    </source>
</reference>
<reference key="5">
    <citation type="journal article" date="2004" name="Protein Sci.">
        <title>Signal peptide prediction based on analysis of experimentally verified cleavage sites.</title>
        <authorList>
            <person name="Zhang Z."/>
            <person name="Henzel W.J."/>
        </authorList>
    </citation>
    <scope>PROTEIN SEQUENCE OF 19-33</scope>
</reference>
<reference key="6">
    <citation type="journal article" date="2013" name="Proc. Natl. Acad. Sci. U.S.A.">
        <title>Tapasin-related protein TAPBPR is an additional component of the MHC class I presentation pathway.</title>
        <authorList>
            <person name="Boyle L.H."/>
            <person name="Hermann C."/>
            <person name="Boname J.M."/>
            <person name="Porter K.M."/>
            <person name="Patel P.A."/>
            <person name="Burr M.L."/>
            <person name="Duncan L.M."/>
            <person name="Harbour M.E."/>
            <person name="Rhodes D.A."/>
            <person name="Skjodt K."/>
            <person name="Lehner P.J."/>
            <person name="Trowsdale J."/>
        </authorList>
    </citation>
    <scope>FUNCTION</scope>
    <scope>INDUCTION</scope>
    <scope>SUBCELLULAR LOCATION</scope>
</reference>
<reference key="7">
    <citation type="journal article" date="2014" name="Immunology">
        <title>TAPBPR isoforms exhibit altered association with MHC class I.</title>
        <authorList>
            <person name="Porter K.M."/>
            <person name="Hermann C."/>
            <person name="Traherne J.A."/>
            <person name="Boyle L.H."/>
        </authorList>
    </citation>
    <scope>ALTERNATIVE SPLICING (ISOFORMS ALPHA; BETA; GAMMA; DELTA; EPSILON; ETA AND ZETA)</scope>
</reference>
<reference key="8">
    <citation type="journal article" date="2016" name="Proc. Natl. Acad. Sci. U.S.A.">
        <title>Interaction of TAPBPR, a tapasin homolog, with MHC-I molecules promotes peptide editing.</title>
        <authorList>
            <person name="Morozov G.I."/>
            <person name="Zhao H."/>
            <person name="Mage M.G."/>
            <person name="Boyd L.F."/>
            <person name="Jiang J."/>
            <person name="Dolan M.A."/>
            <person name="Venna R."/>
            <person name="Norcross M.A."/>
            <person name="McMurtrey C.P."/>
            <person name="Hildebrand W."/>
            <person name="Schuck P."/>
            <person name="Natarajan K."/>
            <person name="Margulies D.H."/>
        </authorList>
    </citation>
    <scope>FUNCTION</scope>
    <scope>INTERACTION WITH HLA-A*02-B2M</scope>
</reference>
<reference key="9">
    <citation type="journal article" date="2020" name="Proc. Natl. Acad. Sci. U.S.A.">
        <title>Endoplasmic reticulum chaperones stabilize ligand-receptive MR1 molecules for efficient presentation of metabolite antigens.</title>
        <authorList>
            <person name="McWilliam H.E.G."/>
            <person name="Mak J.Y.W."/>
            <person name="Awad W."/>
            <person name="Zorkau M."/>
            <person name="Cruz-Gomez S."/>
            <person name="Lim H.J."/>
            <person name="Yan Y."/>
            <person name="Wormald S."/>
            <person name="Dagley L.F."/>
            <person name="Eckle S.B.G."/>
            <person name="Corbett A.J."/>
            <person name="Liu H."/>
            <person name="Li S."/>
            <person name="Reddiex S.J.J."/>
            <person name="Mintern J.D."/>
            <person name="Liu L."/>
            <person name="McCluskey J."/>
            <person name="Rossjohn J."/>
            <person name="Fairlie D.P."/>
            <person name="Villadangos J.A."/>
        </authorList>
    </citation>
    <scope>SUBUNIT</scope>
    <scope>MUTAGENESIS OF CYS-115 AND ILE-282</scope>
</reference>
<reference evidence="15" key="10">
    <citation type="journal article" date="2022" name="Nat. Chem. Biol.">
        <title>TAPBPR employs a ligand-independent docking mechanism to chaperone MR1 molecules.</title>
        <authorList>
            <person name="McShan A.C."/>
            <person name="Devlin C.A."/>
            <person name="Papadaki G.F."/>
            <person name="Sun Y."/>
            <person name="Green A.I."/>
            <person name="Morozov G.I."/>
            <person name="Burslem G.M."/>
            <person name="Procko E."/>
            <person name="Sgourakis N.G."/>
        </authorList>
    </citation>
    <scope>STRUCTURE BY NMR OF 22-405</scope>
    <scope>INTERACTION WITH MR1</scope>
    <scope>INTERACTION WITH HLA-A*02-B2M-PEPTIDE</scope>
    <scope>SUBUNIT</scope>
    <scope>MUTAGENESIS OF GLU-226; ARG-228; GLN-230 AND GLN-293</scope>
</reference>
<feature type="signal peptide" evidence="6">
    <location>
        <begin position="1"/>
        <end position="18"/>
    </location>
</feature>
<feature type="chain" id="PRO_0000014993" description="Tapasin-related protein">
    <location>
        <begin position="19"/>
        <end position="468"/>
    </location>
</feature>
<feature type="topological domain" description="Lumenal" evidence="1">
    <location>
        <begin position="19"/>
        <end position="405"/>
    </location>
</feature>
<feature type="transmembrane region" description="Helical" evidence="1">
    <location>
        <begin position="406"/>
        <end position="426"/>
    </location>
</feature>
<feature type="topological domain" description="Cytoplasmic" evidence="1">
    <location>
        <begin position="427"/>
        <end position="468"/>
    </location>
</feature>
<feature type="domain" description="Ig-like V-type">
    <location>
        <begin position="181"/>
        <end position="297"/>
    </location>
</feature>
<feature type="domain" description="Ig-like C1-type">
    <location>
        <begin position="304"/>
        <end position="394"/>
    </location>
</feature>
<feature type="region of interest" description="Disordered" evidence="3">
    <location>
        <begin position="449"/>
        <end position="468"/>
    </location>
</feature>
<feature type="disulfide bond" evidence="2">
    <location>
        <begin position="212"/>
        <end position="283"/>
    </location>
</feature>
<feature type="disulfide bond" evidence="2">
    <location>
        <begin position="321"/>
        <end position="382"/>
    </location>
</feature>
<feature type="splice variant" id="VSP_057089" description="In isoform epsilon." evidence="12">
    <location>
        <begin position="189"/>
        <end position="402"/>
    </location>
</feature>
<feature type="splice variant" id="VSP_057090" description="In isoform eta." evidence="12">
    <original>QLVYSWTAGQGQAVRKGATLEPAQLGMARDASLTLPGLTIQDEGTYICQITTSLYRAQQIIQL</original>
    <variation>RGDLHLPDHHLSVPSSADHPAQHPRAENSLGSHLCQQSLPSCTDVPGASETASTYRTWAASG</variation>
    <location>
        <begin position="236"/>
        <end position="298"/>
    </location>
</feature>
<feature type="splice variant" id="VSP_057091" description="In isoform delta." evidence="12">
    <original>QLVYSWTAGQGQAVRKGATLEPAQLGM</original>
    <variation>RGDLHLPDHHLSVPSSADHPAQHPSFP</variation>
    <location>
        <begin position="236"/>
        <end position="262"/>
    </location>
</feature>
<feature type="splice variant" id="VSP_057092" description="In isoform delta." evidence="12">
    <location>
        <begin position="263"/>
        <end position="468"/>
    </location>
</feature>
<feature type="splice variant" id="VSP_057093" description="In isoform eta." evidence="12">
    <location>
        <begin position="299"/>
        <end position="468"/>
    </location>
</feature>
<feature type="splice variant" id="VSP_057094" description="In isoform gamma." evidence="12">
    <location>
        <begin position="302"/>
        <end position="402"/>
    </location>
</feature>
<feature type="splice variant" id="VSP_057095" description="In isoform zeta." evidence="12">
    <original>QAPTGLGLLQAERWETTSCADTQSSHLHEDRTARVSQPS</original>
    <variation>QEASAFLHCAPWAHAPRQRTGRSEGTRRRQNVQMEDKTKEPGWWCDGRKTKLEEMEKEQVRDNEAWVGAGLPLPNSALSK</variation>
    <location>
        <begin position="430"/>
        <end position="468"/>
    </location>
</feature>
<feature type="splice variant" id="VSP_057096" description="In isoform beta." evidence="12">
    <original>Q</original>
    <variation>QEASAFLHCAPWAHAPRQRTGRSEGTRRRQNVQMEDKTKEP</variation>
    <location>
        <position position="430"/>
    </location>
</feature>
<feature type="sequence variant" id="VAR_071757" description="In dbSNP:rs2041385." evidence="5 7">
    <original>A</original>
    <variation>V</variation>
    <location>
        <position position="42"/>
    </location>
</feature>
<feature type="sequence variant" id="VAR_071758" description="In dbSNP:rs2532501." evidence="5 7">
    <original>M</original>
    <variation>V</variation>
    <location>
        <position position="146"/>
    </location>
</feature>
<feature type="sequence variant" id="VAR_033627" description="In dbSNP:rs7295376." evidence="4 5">
    <original>G</original>
    <variation>R</variation>
    <location>
        <position position="151"/>
    </location>
</feature>
<feature type="sequence variant" id="VAR_071759" description="In dbSNP:rs2532500." evidence="5 7">
    <original>T</original>
    <variation>A</variation>
    <location>
        <position position="165"/>
    </location>
</feature>
<feature type="sequence variant" id="VAR_071760" description="In dbSNP:rs2041387." evidence="5 7">
    <original>A</original>
    <variation>V</variation>
    <location>
        <position position="169"/>
    </location>
</feature>
<feature type="sequence variant" id="VAR_056090" description="In dbSNP:rs1045546." evidence="4">
    <original>T</original>
    <variation>M</variation>
    <location>
        <position position="334"/>
    </location>
</feature>
<feature type="mutagenesis site" description="No effect on cell surface expression of MR1-metabolite antigen complex." evidence="10">
    <original>C</original>
    <variation>A</variation>
    <location>
        <position position="115"/>
    </location>
</feature>
<feature type="mutagenesis site" description="Loss of MR1 expression at the cell surface; when associated with Glu-228; Ser-230 and Ser-293." evidence="11">
    <original>E</original>
    <variation>K</variation>
    <location>
        <position position="226"/>
    </location>
</feature>
<feature type="mutagenesis site" description="Loss of MR1 expression at the cell surface; when associated with Glu-226; Ser-230 and Ser-293." evidence="11">
    <original>R</original>
    <variation>E</variation>
    <location>
        <position position="228"/>
    </location>
</feature>
<feature type="mutagenesis site" description="Loss of MR1 expression at the cell surface; when associated with Glu-226; Ser-228 and Ser-293." evidence="11">
    <original>Q</original>
    <variation>S</variation>
    <location>
        <position position="230"/>
    </location>
</feature>
<feature type="mutagenesis site" description="Decreases cell surface expression of MR1-metabolite antigen complex." evidence="10">
    <original>I</original>
    <variation>K</variation>
    <location>
        <position position="282"/>
    </location>
</feature>
<feature type="mutagenesis site" description="Loss of MR1 expression at the cell surface; when associated with Glu-226; Ser-228 and Ser-230." evidence="11">
    <original>Q</original>
    <variation>S</variation>
    <location>
        <position position="293"/>
    </location>
</feature>
<feature type="strand" evidence="17">
    <location>
        <begin position="28"/>
        <end position="30"/>
    </location>
</feature>
<feature type="strand" evidence="16">
    <location>
        <begin position="32"/>
        <end position="37"/>
    </location>
</feature>
<feature type="strand" evidence="16">
    <location>
        <begin position="62"/>
        <end position="68"/>
    </location>
</feature>
<feature type="turn" evidence="17">
    <location>
        <begin position="81"/>
        <end position="85"/>
    </location>
</feature>
<feature type="strand" evidence="16">
    <location>
        <begin position="87"/>
        <end position="90"/>
    </location>
</feature>
<feature type="strand" evidence="17">
    <location>
        <begin position="92"/>
        <end position="95"/>
    </location>
</feature>
<feature type="helix" evidence="17">
    <location>
        <begin position="104"/>
        <end position="106"/>
    </location>
</feature>
<feature type="helix" evidence="17">
    <location>
        <begin position="109"/>
        <end position="116"/>
    </location>
</feature>
<feature type="strand" evidence="16">
    <location>
        <begin position="120"/>
        <end position="126"/>
    </location>
</feature>
<feature type="strand" evidence="17">
    <location>
        <begin position="130"/>
        <end position="132"/>
    </location>
</feature>
<feature type="strand" evidence="16">
    <location>
        <begin position="141"/>
        <end position="151"/>
    </location>
</feature>
<feature type="strand" evidence="16">
    <location>
        <begin position="154"/>
        <end position="160"/>
    </location>
</feature>
<feature type="strand" evidence="17">
    <location>
        <begin position="177"/>
        <end position="179"/>
    </location>
</feature>
<feature type="turn" evidence="16">
    <location>
        <begin position="181"/>
        <end position="183"/>
    </location>
</feature>
<feature type="strand" evidence="16">
    <location>
        <begin position="187"/>
        <end position="196"/>
    </location>
</feature>
<feature type="strand" evidence="16">
    <location>
        <begin position="198"/>
        <end position="202"/>
    </location>
</feature>
<feature type="strand" evidence="16">
    <location>
        <begin position="207"/>
        <end position="210"/>
    </location>
</feature>
<feature type="strand" evidence="16">
    <location>
        <begin position="213"/>
        <end position="216"/>
    </location>
</feature>
<feature type="strand" evidence="16">
    <location>
        <begin position="218"/>
        <end position="220"/>
    </location>
</feature>
<feature type="strand" evidence="16">
    <location>
        <begin position="222"/>
        <end position="231"/>
    </location>
</feature>
<feature type="strand" evidence="16">
    <location>
        <begin position="234"/>
        <end position="241"/>
    </location>
</feature>
<feature type="strand" evidence="16">
    <location>
        <begin position="246"/>
        <end position="248"/>
    </location>
</feature>
<feature type="strand" evidence="16">
    <location>
        <begin position="263"/>
        <end position="265"/>
    </location>
</feature>
<feature type="strand" evidence="16">
    <location>
        <begin position="268"/>
        <end position="272"/>
    </location>
</feature>
<feature type="helix" evidence="16">
    <location>
        <begin position="275"/>
        <end position="277"/>
    </location>
</feature>
<feature type="strand" evidence="16">
    <location>
        <begin position="279"/>
        <end position="289"/>
    </location>
</feature>
<feature type="strand" evidence="16">
    <location>
        <begin position="291"/>
        <end position="300"/>
    </location>
</feature>
<feature type="strand" evidence="16">
    <location>
        <begin position="309"/>
        <end position="311"/>
    </location>
</feature>
<feature type="strand" evidence="17">
    <location>
        <begin position="313"/>
        <end position="316"/>
    </location>
</feature>
<feature type="strand" evidence="16">
    <location>
        <begin position="318"/>
        <end position="329"/>
    </location>
</feature>
<feature type="strand" evidence="17">
    <location>
        <begin position="332"/>
        <end position="338"/>
    </location>
</feature>
<feature type="strand" evidence="17">
    <location>
        <begin position="340"/>
        <end position="342"/>
    </location>
</feature>
<feature type="strand" evidence="17">
    <location>
        <begin position="345"/>
        <end position="348"/>
    </location>
</feature>
<feature type="strand" evidence="17">
    <location>
        <begin position="351"/>
        <end position="357"/>
    </location>
</feature>
<feature type="strand" evidence="16">
    <location>
        <begin position="363"/>
        <end position="370"/>
    </location>
</feature>
<feature type="turn" evidence="17">
    <location>
        <begin position="374"/>
        <end position="376"/>
    </location>
</feature>
<feature type="strand" evidence="17">
    <location>
        <begin position="378"/>
        <end position="385"/>
    </location>
</feature>
<feature type="strand" evidence="17">
    <location>
        <begin position="393"/>
        <end position="399"/>
    </location>
</feature>
<feature type="helix" evidence="17">
    <location>
        <begin position="402"/>
        <end position="404"/>
    </location>
</feature>
<organism>
    <name type="scientific">Homo sapiens</name>
    <name type="common">Human</name>
    <dbReference type="NCBI Taxonomy" id="9606"/>
    <lineage>
        <taxon>Eukaryota</taxon>
        <taxon>Metazoa</taxon>
        <taxon>Chordata</taxon>
        <taxon>Craniata</taxon>
        <taxon>Vertebrata</taxon>
        <taxon>Euteleostomi</taxon>
        <taxon>Mammalia</taxon>
        <taxon>Eutheria</taxon>
        <taxon>Euarchontoglires</taxon>
        <taxon>Primates</taxon>
        <taxon>Haplorrhini</taxon>
        <taxon>Catarrhini</taxon>
        <taxon>Hominidae</taxon>
        <taxon>Homo</taxon>
    </lineage>
</organism>
<proteinExistence type="evidence at protein level"/>
<gene>
    <name type="primary">TAPBPL</name>
</gene>
<dbReference type="EMBL" id="AK001005">
    <property type="protein sequence ID" value="BAA91465.1"/>
    <property type="molecule type" value="mRNA"/>
</dbReference>
<dbReference type="EMBL" id="AK002056">
    <property type="protein sequence ID" value="BAB41077.1"/>
    <property type="molecule type" value="mRNA"/>
</dbReference>
<dbReference type="EMBL" id="AC005840">
    <property type="status" value="NOT_ANNOTATED_CDS"/>
    <property type="molecule type" value="Genomic_DNA"/>
</dbReference>
<dbReference type="EMBL" id="BC015017">
    <property type="protein sequence ID" value="AAH15017.1"/>
    <property type="molecule type" value="mRNA"/>
</dbReference>
<dbReference type="CCDS" id="CCDS8546.1">
    <molecule id="Q9BX59-1"/>
</dbReference>
<dbReference type="RefSeq" id="NP_060479.3">
    <molecule id="Q9BX59-1"/>
    <property type="nucleotide sequence ID" value="NM_018009.4"/>
</dbReference>
<dbReference type="PDB" id="5WER">
    <property type="method" value="X-ray"/>
    <property type="resolution" value="3.41 A"/>
    <property type="chains" value="C/F/I/L=22-410"/>
</dbReference>
<dbReference type="PDB" id="7RNO">
    <property type="method" value="NMR"/>
    <property type="chains" value="C=22-405"/>
</dbReference>
<dbReference type="PDB" id="9C96">
    <property type="method" value="EM"/>
    <property type="resolution" value="3.00 A"/>
    <property type="chains" value="C=22-405"/>
</dbReference>
<dbReference type="PDBsum" id="5WER"/>
<dbReference type="PDBsum" id="7RNO"/>
<dbReference type="PDBsum" id="9C96"/>
<dbReference type="EMDB" id="EMD-45360"/>
<dbReference type="SMR" id="Q9BX59"/>
<dbReference type="BioGRID" id="120395">
    <property type="interactions" value="17"/>
</dbReference>
<dbReference type="FunCoup" id="Q9BX59">
    <property type="interactions" value="365"/>
</dbReference>
<dbReference type="IntAct" id="Q9BX59">
    <property type="interactions" value="13"/>
</dbReference>
<dbReference type="MINT" id="Q9BX59"/>
<dbReference type="STRING" id="9606.ENSP00000266556"/>
<dbReference type="TCDB" id="8.A.196.1.2">
    <property type="family name" value="the tapasin (tapasin) family"/>
</dbReference>
<dbReference type="iPTMnet" id="Q9BX59"/>
<dbReference type="PhosphoSitePlus" id="Q9BX59"/>
<dbReference type="BioMuta" id="TAPBPL"/>
<dbReference type="DMDM" id="296452847"/>
<dbReference type="jPOST" id="Q9BX59"/>
<dbReference type="MassIVE" id="Q9BX59"/>
<dbReference type="PaxDb" id="9606-ENSP00000266556"/>
<dbReference type="PeptideAtlas" id="Q9BX59"/>
<dbReference type="ProteomicsDB" id="79351">
    <molecule id="Q9BX59-1"/>
</dbReference>
<dbReference type="Antibodypedia" id="22408">
    <property type="antibodies" value="356 antibodies from 23 providers"/>
</dbReference>
<dbReference type="DNASU" id="55080"/>
<dbReference type="Ensembl" id="ENST00000266556.8">
    <molecule id="Q9BX59-1"/>
    <property type="protein sequence ID" value="ENSP00000266556.7"/>
    <property type="gene ID" value="ENSG00000139192.12"/>
</dbReference>
<dbReference type="GeneID" id="55080"/>
<dbReference type="KEGG" id="hsa:55080"/>
<dbReference type="MANE-Select" id="ENST00000266556.8">
    <property type="protein sequence ID" value="ENSP00000266556.7"/>
    <property type="RefSeq nucleotide sequence ID" value="NM_018009.5"/>
    <property type="RefSeq protein sequence ID" value="NP_060479.3"/>
</dbReference>
<dbReference type="UCSC" id="uc001qog.5">
    <molecule id="Q9BX59-1"/>
    <property type="organism name" value="human"/>
</dbReference>
<dbReference type="AGR" id="HGNC:30683"/>
<dbReference type="CTD" id="55080"/>
<dbReference type="DisGeNET" id="55080"/>
<dbReference type="GeneCards" id="TAPBPL"/>
<dbReference type="HGNC" id="HGNC:30683">
    <property type="gene designation" value="TAPBPL"/>
</dbReference>
<dbReference type="HPA" id="ENSG00000139192">
    <property type="expression patterns" value="Low tissue specificity"/>
</dbReference>
<dbReference type="MalaCards" id="TAPBPL"/>
<dbReference type="MIM" id="607081">
    <property type="type" value="gene"/>
</dbReference>
<dbReference type="neXtProt" id="NX_Q9BX59"/>
<dbReference type="OpenTargets" id="ENSG00000139192"/>
<dbReference type="PharmGKB" id="PA134955671"/>
<dbReference type="VEuPathDB" id="HostDB:ENSG00000139192"/>
<dbReference type="eggNOG" id="ENOG502QSXA">
    <property type="taxonomic scope" value="Eukaryota"/>
</dbReference>
<dbReference type="GeneTree" id="ENSGT00940000160453"/>
<dbReference type="HOGENOM" id="CLU_033813_0_0_1"/>
<dbReference type="InParanoid" id="Q9BX59"/>
<dbReference type="OMA" id="YPLDAQM"/>
<dbReference type="OrthoDB" id="8929156at2759"/>
<dbReference type="PAN-GO" id="Q9BX59">
    <property type="GO annotations" value="4 GO annotations based on evolutionary models"/>
</dbReference>
<dbReference type="PhylomeDB" id="Q9BX59"/>
<dbReference type="TreeFam" id="TF334274"/>
<dbReference type="PathwayCommons" id="Q9BX59"/>
<dbReference type="SignaLink" id="Q9BX59"/>
<dbReference type="BioGRID-ORCS" id="55080">
    <property type="hits" value="9 hits in 1152 CRISPR screens"/>
</dbReference>
<dbReference type="ChiTaRS" id="TAPBPL">
    <property type="organism name" value="human"/>
</dbReference>
<dbReference type="GenomeRNAi" id="55080"/>
<dbReference type="Pharos" id="Q9BX59">
    <property type="development level" value="Tbio"/>
</dbReference>
<dbReference type="PRO" id="PR:Q9BX59"/>
<dbReference type="Proteomes" id="UP000005640">
    <property type="component" value="Chromosome 12"/>
</dbReference>
<dbReference type="RNAct" id="Q9BX59">
    <property type="molecule type" value="protein"/>
</dbReference>
<dbReference type="Bgee" id="ENSG00000139192">
    <property type="expression patterns" value="Expressed in granulocyte and 173 other cell types or tissues"/>
</dbReference>
<dbReference type="ExpressionAtlas" id="Q9BX59">
    <property type="expression patterns" value="baseline and differential"/>
</dbReference>
<dbReference type="GO" id="GO:0005783">
    <property type="term" value="C:endoplasmic reticulum"/>
    <property type="evidence" value="ECO:0000314"/>
    <property type="project" value="UniProtKB"/>
</dbReference>
<dbReference type="GO" id="GO:0000139">
    <property type="term" value="C:Golgi membrane"/>
    <property type="evidence" value="ECO:0007669"/>
    <property type="project" value="UniProtKB-SubCell"/>
</dbReference>
<dbReference type="GO" id="GO:0042824">
    <property type="term" value="C:MHC class I peptide loading complex"/>
    <property type="evidence" value="ECO:0000318"/>
    <property type="project" value="GO_Central"/>
</dbReference>
<dbReference type="GO" id="GO:0005886">
    <property type="term" value="C:plasma membrane"/>
    <property type="evidence" value="ECO:0007669"/>
    <property type="project" value="UniProtKB-SubCell"/>
</dbReference>
<dbReference type="GO" id="GO:0023024">
    <property type="term" value="F:MHC class I protein complex binding"/>
    <property type="evidence" value="ECO:0000314"/>
    <property type="project" value="UniProtKB"/>
</dbReference>
<dbReference type="GO" id="GO:0062061">
    <property type="term" value="F:TAP complex binding"/>
    <property type="evidence" value="ECO:0000318"/>
    <property type="project" value="GO_Central"/>
</dbReference>
<dbReference type="GO" id="GO:0002590">
    <property type="term" value="P:negative regulation of antigen processing and presentation of peptide antigen via MHC class I"/>
    <property type="evidence" value="ECO:0000314"/>
    <property type="project" value="UniProtKB"/>
</dbReference>
<dbReference type="GO" id="GO:0002502">
    <property type="term" value="P:peptide antigen assembly with MHC class I protein complex"/>
    <property type="evidence" value="ECO:0000314"/>
    <property type="project" value="UniProtKB"/>
</dbReference>
<dbReference type="CDD" id="cd05771">
    <property type="entry name" value="IgC1_Tapasin_R"/>
    <property type="match status" value="1"/>
</dbReference>
<dbReference type="FunFam" id="2.60.40.10:FF:001475">
    <property type="entry name" value="TAP binding protein-like variant"/>
    <property type="match status" value="1"/>
</dbReference>
<dbReference type="FunFam" id="2.60.40.10:FF:001914">
    <property type="entry name" value="TAP binding protein-like variant"/>
    <property type="match status" value="1"/>
</dbReference>
<dbReference type="FunFam" id="2.60.40.10:FF:001957">
    <property type="entry name" value="TAP binding protein-like variant"/>
    <property type="match status" value="1"/>
</dbReference>
<dbReference type="Gene3D" id="2.60.40.10">
    <property type="entry name" value="Immunoglobulins"/>
    <property type="match status" value="3"/>
</dbReference>
<dbReference type="InterPro" id="IPR007110">
    <property type="entry name" value="Ig-like_dom"/>
</dbReference>
<dbReference type="InterPro" id="IPR036179">
    <property type="entry name" value="Ig-like_dom_sf"/>
</dbReference>
<dbReference type="InterPro" id="IPR013783">
    <property type="entry name" value="Ig-like_fold"/>
</dbReference>
<dbReference type="InterPro" id="IPR003006">
    <property type="entry name" value="Ig/MHC_CS"/>
</dbReference>
<dbReference type="InterPro" id="IPR003597">
    <property type="entry name" value="Ig_C1-set"/>
</dbReference>
<dbReference type="InterPro" id="IPR003599">
    <property type="entry name" value="Ig_sub"/>
</dbReference>
<dbReference type="InterPro" id="IPR013106">
    <property type="entry name" value="Ig_V-set"/>
</dbReference>
<dbReference type="InterPro" id="IPR050380">
    <property type="entry name" value="Immune_Resp_Modulators"/>
</dbReference>
<dbReference type="PANTHER" id="PTHR23411">
    <property type="entry name" value="TAPASIN"/>
    <property type="match status" value="1"/>
</dbReference>
<dbReference type="Pfam" id="PF07654">
    <property type="entry name" value="C1-set"/>
    <property type="match status" value="1"/>
</dbReference>
<dbReference type="Pfam" id="PF07686">
    <property type="entry name" value="V-set"/>
    <property type="match status" value="1"/>
</dbReference>
<dbReference type="SMART" id="SM00409">
    <property type="entry name" value="IG"/>
    <property type="match status" value="1"/>
</dbReference>
<dbReference type="SMART" id="SM00407">
    <property type="entry name" value="IGc1"/>
    <property type="match status" value="1"/>
</dbReference>
<dbReference type="SUPFAM" id="SSF48726">
    <property type="entry name" value="Immunoglobulin"/>
    <property type="match status" value="2"/>
</dbReference>
<dbReference type="PROSITE" id="PS50835">
    <property type="entry name" value="IG_LIKE"/>
    <property type="match status" value="2"/>
</dbReference>
<dbReference type="PROSITE" id="PS00290">
    <property type="entry name" value="IG_MHC"/>
    <property type="match status" value="1"/>
</dbReference>